<organism>
    <name type="scientific">Mycobacterium tuberculosis (strain CDC 1551 / Oshkosh)</name>
    <dbReference type="NCBI Taxonomy" id="83331"/>
    <lineage>
        <taxon>Bacteria</taxon>
        <taxon>Bacillati</taxon>
        <taxon>Actinomycetota</taxon>
        <taxon>Actinomycetes</taxon>
        <taxon>Mycobacteriales</taxon>
        <taxon>Mycobacteriaceae</taxon>
        <taxon>Mycobacterium</taxon>
        <taxon>Mycobacterium tuberculosis complex</taxon>
    </lineage>
</organism>
<protein>
    <recommendedName>
        <fullName evidence="1">Thiol peroxidase</fullName>
        <shortName evidence="1">Tpx</shortName>
        <ecNumber evidence="1">1.11.1.24</ecNumber>
    </recommendedName>
    <alternativeName>
        <fullName evidence="1">Peroxiredoxin tpx</fullName>
        <shortName evidence="1">Prx</shortName>
    </alternativeName>
    <alternativeName>
        <fullName evidence="1">Thioredoxin peroxidase</fullName>
    </alternativeName>
    <alternativeName>
        <fullName evidence="1">Thioredoxin-dependent peroxiredoxin</fullName>
    </alternativeName>
</protein>
<name>TPX_MYCTO</name>
<comment type="function">
    <text evidence="1">Thiol-specific peroxidase that catalyzes the reduction of hydrogen peroxide and organic hydroperoxides to water and alcohols, respectively. Plays a role in cell protection against oxidative stress by detoxifying peroxides.</text>
</comment>
<comment type="catalytic activity">
    <reaction evidence="1">
        <text>a hydroperoxide + [thioredoxin]-dithiol = an alcohol + [thioredoxin]-disulfide + H2O</text>
        <dbReference type="Rhea" id="RHEA:62620"/>
        <dbReference type="Rhea" id="RHEA-COMP:10698"/>
        <dbReference type="Rhea" id="RHEA-COMP:10700"/>
        <dbReference type="ChEBI" id="CHEBI:15377"/>
        <dbReference type="ChEBI" id="CHEBI:29950"/>
        <dbReference type="ChEBI" id="CHEBI:30879"/>
        <dbReference type="ChEBI" id="CHEBI:35924"/>
        <dbReference type="ChEBI" id="CHEBI:50058"/>
        <dbReference type="EC" id="1.11.1.24"/>
    </reaction>
</comment>
<comment type="subunit">
    <text evidence="1">Homodimer.</text>
</comment>
<comment type="miscellaneous">
    <text evidence="1">The active site is a conserved redox-active cysteine residue, the peroxidatic cysteine (C(P)), which makes the nucleophilic attack on the peroxide substrate. The peroxide oxidizes the C(P)-SH to cysteine sulfenic acid (C(P)-SOH), which then reacts with another cysteine residue, the resolving cysteine (C(R)), to form a disulfide bridge. The disulfide is subsequently reduced by an appropriate electron donor to complete the catalytic cycle. In this atypical 2-Cys peroxiredoxin, C(R) is present in the same subunit to form an intramolecular disulfide. The disulfide is subsequently reduced by thioredoxin.</text>
</comment>
<comment type="similarity">
    <text evidence="1">Belongs to the peroxiredoxin family. Tpx subfamily.</text>
</comment>
<evidence type="ECO:0000255" key="1">
    <source>
        <dbReference type="HAMAP-Rule" id="MF_00269"/>
    </source>
</evidence>
<accession>P9WG34</accession>
<accession>L0TB06</accession>
<accession>P66952</accession>
<accession>P95282</accession>
<sequence>MAQITLRGNAINTVGELPAVGSPAPAFTLTGGDLGVISSDQFRGKSVLLNIFPSVDTPVCATSVRTFDERAAASGATVLCVSKDLPFAQKRFCGAEGTENVMPASAFRDSFGEDYGVTIADGPMAGLLARAIVVIGADGNVAYTELVPEIAQEPNYEAALAALGA</sequence>
<dbReference type="EC" id="1.11.1.24" evidence="1"/>
<dbReference type="EMBL" id="AE000516">
    <property type="protein sequence ID" value="AAK46254.1"/>
    <property type="molecule type" value="Genomic_DNA"/>
</dbReference>
<dbReference type="PIR" id="H70635">
    <property type="entry name" value="H70635"/>
</dbReference>
<dbReference type="RefSeq" id="WP_003409700.1">
    <property type="nucleotide sequence ID" value="NZ_KK341227.1"/>
</dbReference>
<dbReference type="SMR" id="P9WG34"/>
<dbReference type="KEGG" id="mtc:MT1982"/>
<dbReference type="PATRIC" id="fig|83331.31.peg.2136"/>
<dbReference type="HOGENOM" id="CLU_042529_12_2_11"/>
<dbReference type="Proteomes" id="UP000001020">
    <property type="component" value="Chromosome"/>
</dbReference>
<dbReference type="GO" id="GO:0008379">
    <property type="term" value="F:thioredoxin peroxidase activity"/>
    <property type="evidence" value="ECO:0007669"/>
    <property type="project" value="UniProtKB-UniRule"/>
</dbReference>
<dbReference type="CDD" id="cd03014">
    <property type="entry name" value="PRX_Atyp2cys"/>
    <property type="match status" value="1"/>
</dbReference>
<dbReference type="FunFam" id="3.40.30.10:FF:000056">
    <property type="entry name" value="Thiol peroxidase"/>
    <property type="match status" value="1"/>
</dbReference>
<dbReference type="Gene3D" id="3.40.30.10">
    <property type="entry name" value="Glutaredoxin"/>
    <property type="match status" value="1"/>
</dbReference>
<dbReference type="HAMAP" id="MF_00269">
    <property type="entry name" value="Tpx"/>
    <property type="match status" value="1"/>
</dbReference>
<dbReference type="InterPro" id="IPR013740">
    <property type="entry name" value="Redoxin"/>
</dbReference>
<dbReference type="InterPro" id="IPR036249">
    <property type="entry name" value="Thioredoxin-like_sf"/>
</dbReference>
<dbReference type="InterPro" id="IPR013766">
    <property type="entry name" value="Thioredoxin_domain"/>
</dbReference>
<dbReference type="InterPro" id="IPR002065">
    <property type="entry name" value="TPX"/>
</dbReference>
<dbReference type="InterPro" id="IPR018219">
    <property type="entry name" value="Tpx_CS"/>
</dbReference>
<dbReference type="InterPro" id="IPR050455">
    <property type="entry name" value="Tpx_Peroxidase_subfamily"/>
</dbReference>
<dbReference type="NCBIfam" id="NF001808">
    <property type="entry name" value="PRK00522.1"/>
    <property type="match status" value="1"/>
</dbReference>
<dbReference type="PANTHER" id="PTHR43110">
    <property type="entry name" value="THIOL PEROXIDASE"/>
    <property type="match status" value="1"/>
</dbReference>
<dbReference type="PANTHER" id="PTHR43110:SF1">
    <property type="entry name" value="THIOL PEROXIDASE"/>
    <property type="match status" value="1"/>
</dbReference>
<dbReference type="Pfam" id="PF08534">
    <property type="entry name" value="Redoxin"/>
    <property type="match status" value="1"/>
</dbReference>
<dbReference type="SUPFAM" id="SSF52833">
    <property type="entry name" value="Thioredoxin-like"/>
    <property type="match status" value="1"/>
</dbReference>
<dbReference type="PROSITE" id="PS51352">
    <property type="entry name" value="THIOREDOXIN_2"/>
    <property type="match status" value="1"/>
</dbReference>
<dbReference type="PROSITE" id="PS01265">
    <property type="entry name" value="TPX"/>
    <property type="match status" value="1"/>
</dbReference>
<keyword id="KW-0049">Antioxidant</keyword>
<keyword id="KW-1015">Disulfide bond</keyword>
<keyword id="KW-0560">Oxidoreductase</keyword>
<keyword id="KW-0575">Peroxidase</keyword>
<keyword id="KW-0676">Redox-active center</keyword>
<keyword id="KW-1185">Reference proteome</keyword>
<reference key="1">
    <citation type="journal article" date="2002" name="J. Bacteriol.">
        <title>Whole-genome comparison of Mycobacterium tuberculosis clinical and laboratory strains.</title>
        <authorList>
            <person name="Fleischmann R.D."/>
            <person name="Alland D."/>
            <person name="Eisen J.A."/>
            <person name="Carpenter L."/>
            <person name="White O."/>
            <person name="Peterson J.D."/>
            <person name="DeBoy R.T."/>
            <person name="Dodson R.J."/>
            <person name="Gwinn M.L."/>
            <person name="Haft D.H."/>
            <person name="Hickey E.K."/>
            <person name="Kolonay J.F."/>
            <person name="Nelson W.C."/>
            <person name="Umayam L.A."/>
            <person name="Ermolaeva M.D."/>
            <person name="Salzberg S.L."/>
            <person name="Delcher A."/>
            <person name="Utterback T.R."/>
            <person name="Weidman J.F."/>
            <person name="Khouri H.M."/>
            <person name="Gill J."/>
            <person name="Mikula A."/>
            <person name="Bishai W."/>
            <person name="Jacobs W.R. Jr."/>
            <person name="Venter J.C."/>
            <person name="Fraser C.M."/>
        </authorList>
    </citation>
    <scope>NUCLEOTIDE SEQUENCE [LARGE SCALE GENOMIC DNA]</scope>
    <source>
        <strain>CDC 1551 / Oshkosh</strain>
    </source>
</reference>
<gene>
    <name evidence="1" type="primary">tpx</name>
    <name type="ordered locus">MT1982</name>
</gene>
<proteinExistence type="inferred from homology"/>
<feature type="chain" id="PRO_0000428431" description="Thiol peroxidase">
    <location>
        <begin position="1"/>
        <end position="165"/>
    </location>
</feature>
<feature type="domain" description="Thioredoxin" evidence="1">
    <location>
        <begin position="18"/>
        <end position="165"/>
    </location>
</feature>
<feature type="active site" description="Cysteine sulfenic acid (-SOH) intermediate" evidence="1">
    <location>
        <position position="60"/>
    </location>
</feature>
<feature type="disulfide bond" description="Redox-active" evidence="1">
    <location>
        <begin position="60"/>
        <end position="93"/>
    </location>
</feature>